<comment type="function">
    <text evidence="8 11 12">Potent mitogen for mature parenchymal hepatocyte cells, seems to be a hepatotrophic factor, and acts as a growth factor for a broad spectrum of tissues and cell types (PubMed:20624990). Activating ligand for the receptor tyrosine kinase MET by binding to it and promoting its dimerization (PubMed:15167892, PubMed:20977675). Activates MAPK signaling following TMPRSS13 cleavage and activation (PubMed:20977675).</text>
</comment>
<comment type="subunit">
    <text evidence="8 13">Dimer of an alpha chain and a beta chain linked by a disulfide bond. Interacts with SRPX2; the interaction increases HGF mitogenic activity.</text>
</comment>
<comment type="interaction">
    <interactant intactId="EBI-1039104">
        <id>P14210</id>
    </interactant>
    <interactant intactId="EBI-10173507">
        <id>Q6UY14-3</id>
        <label>ADAMTSL4</label>
    </interactant>
    <organismsDiffer>false</organismsDiffer>
    <experiments>3</experiments>
</comment>
<comment type="interaction">
    <interactant intactId="EBI-1039104">
        <id>P14210</id>
    </interactant>
    <interactant intactId="EBI-1039104">
        <id>P14210</id>
        <label>HGF</label>
    </interactant>
    <organismsDiffer>false</organismsDiffer>
    <experiments>2</experiments>
</comment>
<comment type="interaction">
    <interactant intactId="EBI-1039104">
        <id>P14210</id>
    </interactant>
    <interactant intactId="EBI-748397">
        <id>P50222</id>
        <label>MEOX2</label>
    </interactant>
    <organismsDiffer>false</organismsDiffer>
    <experiments>3</experiments>
</comment>
<comment type="interaction">
    <interactant intactId="EBI-1039104">
        <id>P14210</id>
    </interactant>
    <interactant intactId="EBI-1039152">
        <id>P08581</id>
        <label>MET</label>
    </interactant>
    <organismsDiffer>false</organismsDiffer>
    <experiments>7</experiments>
</comment>
<comment type="interaction">
    <interactant intactId="EBI-1039104">
        <id>P14210</id>
    </interactant>
    <interactant intactId="EBI-1798780">
        <id>P16056</id>
        <label>Met</label>
    </interactant>
    <organismsDiffer>true</organismsDiffer>
    <experiments>2</experiments>
</comment>
<comment type="interaction">
    <interactant intactId="EBI-6280319">
        <id>P14210-6</id>
    </interactant>
    <interactant intactId="EBI-6280319">
        <id>P14210-6</id>
        <label>HGF</label>
    </interactant>
    <organismsDiffer>false</organismsDiffer>
    <experiments>3</experiments>
</comment>
<comment type="interaction">
    <interactant intactId="EBI-6280319">
        <id>P14210-6</id>
    </interactant>
    <interactant intactId="EBI-1039152">
        <id>P08581</id>
        <label>MET</label>
    </interactant>
    <organismsDiffer>false</organismsDiffer>
    <experiments>3</experiments>
</comment>
<comment type="alternative products">
    <event type="alternative splicing"/>
    <isoform>
        <id>P14210-1</id>
        <name>1</name>
        <sequence type="displayed"/>
    </isoform>
    <isoform>
        <id>P14210-2</id>
        <name>2</name>
        <sequence type="described" ref="VSP_009622 VSP_009623"/>
    </isoform>
    <isoform>
        <id>P14210-3</id>
        <name>3</name>
        <sequence type="described" ref="VSP_009617"/>
    </isoform>
    <isoform>
        <id>P14210-4</id>
        <name>4</name>
        <name>HGF/NK2</name>
        <sequence type="described" ref="VSP_009620 VSP_009621"/>
    </isoform>
    <isoform>
        <id>P14210-5</id>
        <name>5</name>
        <sequence type="described" ref="VSP_009617 VSP_009622 VSP_009623"/>
    </isoform>
    <isoform>
        <id>P14210-6</id>
        <name>6</name>
        <name>HGF/NK1</name>
        <sequence type="described" ref="VSP_009618 VSP_009619"/>
    </isoform>
</comment>
<comment type="PTM">
    <text evidence="12 14">The single-chain precursor undergoes proteolytic processing by TMPRSS13 resulting in an active two-chain form (PubMed:20977675). The single-chain precursor undergoes proteolytic processing by HGFAC resulting in an active two-chain form (PubMed:8226803).</text>
</comment>
<comment type="disease" evidence="10">
    <disease id="DI-02477">
        <name>Deafness, autosomal recessive, 39</name>
        <acronym>DFNB39</acronym>
        <description>A form of profound prelingual sensorineural hearing loss. Sensorineural deafness results from damage to the neural receptors of the inner ear, the nerve pathways to the brain, or the area of the brain that receives sound information.</description>
        <dbReference type="MIM" id="608265"/>
    </disease>
    <text>The disease is caused by variants affecting the gene represented in this entry.</text>
</comment>
<comment type="miscellaneous">
    <molecule>Isoform 4</molecule>
    <text evidence="22">Acts as a competitive antagonist in MET-signaling.</text>
</comment>
<comment type="similarity">
    <text evidence="4">Belongs to the peptidase S1 family. Plasminogen subfamily.</text>
</comment>
<comment type="caution">
    <text evidence="22">Has lost two of the three essential catalytic residues and so probably has no enzymatic activity.</text>
</comment>
<comment type="online information" name="Wikipedia">
    <link uri="https://en.wikipedia.org/wiki/Hepatocyte_growth_factor"/>
    <text>Hepatocyte growth factor entry</text>
</comment>
<comment type="online information" name="Atlas of Genetics and Cytogenetics in Oncology and Haematology">
    <link uri="https://atlasgeneticsoncology.org/gene/385/HGF"/>
</comment>
<evidence type="ECO:0000250" key="1"/>
<evidence type="ECO:0000255" key="2"/>
<evidence type="ECO:0000255" key="3">
    <source>
        <dbReference type="PROSITE-ProRule" id="PRU00121"/>
    </source>
</evidence>
<evidence type="ECO:0000255" key="4">
    <source>
        <dbReference type="PROSITE-ProRule" id="PRU00274"/>
    </source>
</evidence>
<evidence type="ECO:0000255" key="5">
    <source>
        <dbReference type="PROSITE-ProRule" id="PRU00315"/>
    </source>
</evidence>
<evidence type="ECO:0000269" key="6">
    <source>
    </source>
</evidence>
<evidence type="ECO:0000269" key="7">
    <source>
    </source>
</evidence>
<evidence type="ECO:0000269" key="8">
    <source>
    </source>
</evidence>
<evidence type="ECO:0000269" key="9">
    <source>
    </source>
</evidence>
<evidence type="ECO:0000269" key="10">
    <source>
    </source>
</evidence>
<evidence type="ECO:0000269" key="11">
    <source>
    </source>
</evidence>
<evidence type="ECO:0000269" key="12">
    <source>
    </source>
</evidence>
<evidence type="ECO:0000269" key="13">
    <source>
    </source>
</evidence>
<evidence type="ECO:0000269" key="14">
    <source>
    </source>
</evidence>
<evidence type="ECO:0000269" key="15">
    <source ref="11"/>
</evidence>
<evidence type="ECO:0000303" key="16">
    <source>
    </source>
</evidence>
<evidence type="ECO:0000303" key="17">
    <source>
    </source>
</evidence>
<evidence type="ECO:0000303" key="18">
    <source>
    </source>
</evidence>
<evidence type="ECO:0000303" key="19">
    <source>
    </source>
</evidence>
<evidence type="ECO:0000303" key="20">
    <source>
    </source>
</evidence>
<evidence type="ECO:0000303" key="21">
    <source>
    </source>
</evidence>
<evidence type="ECO:0000305" key="22"/>
<evidence type="ECO:0007829" key="23">
    <source>
        <dbReference type="PDB" id="1GP9"/>
    </source>
</evidence>
<evidence type="ECO:0007829" key="24">
    <source>
        <dbReference type="PDB" id="1NK1"/>
    </source>
</evidence>
<evidence type="ECO:0007829" key="25">
    <source>
        <dbReference type="PDB" id="1SI5"/>
    </source>
</evidence>
<evidence type="ECO:0007829" key="26">
    <source>
        <dbReference type="PDB" id="3HMS"/>
    </source>
</evidence>
<evidence type="ECO:0007829" key="27">
    <source>
        <dbReference type="PDB" id="3HN4"/>
    </source>
</evidence>
<evidence type="ECO:0007829" key="28">
    <source>
        <dbReference type="PDB" id="3SP8"/>
    </source>
</evidence>
<evidence type="ECO:0007829" key="29">
    <source>
        <dbReference type="PDB" id="4K3J"/>
    </source>
</evidence>
<evidence type="ECO:0007829" key="30">
    <source>
        <dbReference type="PDB" id="4O3T"/>
    </source>
</evidence>
<evidence type="ECO:0007829" key="31">
    <source>
        <dbReference type="PDB" id="4O3U"/>
    </source>
</evidence>
<evidence type="ECO:0007829" key="32">
    <source>
        <dbReference type="PDB" id="5CP9"/>
    </source>
</evidence>
<evidence type="ECO:0007829" key="33">
    <source>
        <dbReference type="PDB" id="5CSQ"/>
    </source>
</evidence>
<evidence type="ECO:0007829" key="34">
    <source>
        <dbReference type="PDB" id="7OCL"/>
    </source>
</evidence>
<evidence type="ECO:0007829" key="35">
    <source>
        <dbReference type="PDB" id="7OCM"/>
    </source>
</evidence>
<sequence length="728" mass="83134">MWVTKLLPALLLQHVLLHLLLLPIAIPYAEGQRKRRNTIHEFKKSAKTTLIKIDPALKIKTKKVNTADQCANRCTRNKGLPFTCKAFVFDKARKQCLWFPFNSMSSGVKKEFGHEFDLYENKDYIRNCIIGKGRSYKGTVSITKSGIKCQPWSSMIPHEHSFLPSSYRGKDLQENYCRNPRGEEGGPWCFTSNPEVRYEVCDIPQCSEVECMTCNGESYRGLMDHTESGKICQRWDHQTPHRHKFLPERYPDKGFDDNYCRNPDGQPRPWCYTLDPHTRWEYCAIKTCADNTMNDTDVPLETTECIQGQGEGYRGTVNTIWNGIPCQRWDSQYPHEHDMTPENFKCKDLRENYCRNPDGSESPWCFTTDPNIRVGYCSQIPNCDMSHGQDCYRGNGKNYMGNLSQTRSGLTCSMWDKNMEDLHRHIFWEPDASKLNENYCRNPDDDAHGPWCYTGNPLIPWDYCPISRCEGDTTPTIVNLDHPVISCAKTKQLRVVNGIPTRTNIGWMVSLRYRNKHICGGSLIKESWVLTARQCFPSRDLKDYEAWLGIHDVHGRGDEKCKQVLNVSQLVYGPEGSDLVLMKLARPAVLDDFVSTIDLPNYGCTIPEKTSCSVYGWGYTGLINYDGLLRVAHLYIMGNEKCSQHHRGKVTLNESEICAGAEKIGSGPCEGDYGGPLVCEQHKMRMVLGVIVPGRGCAIPNRPGIFVRVAYYAKWIHKIILTYKVPQS</sequence>
<organism>
    <name type="scientific">Homo sapiens</name>
    <name type="common">Human</name>
    <dbReference type="NCBI Taxonomy" id="9606"/>
    <lineage>
        <taxon>Eukaryota</taxon>
        <taxon>Metazoa</taxon>
        <taxon>Chordata</taxon>
        <taxon>Craniata</taxon>
        <taxon>Vertebrata</taxon>
        <taxon>Euteleostomi</taxon>
        <taxon>Mammalia</taxon>
        <taxon>Eutheria</taxon>
        <taxon>Euarchontoglires</taxon>
        <taxon>Primates</taxon>
        <taxon>Haplorrhini</taxon>
        <taxon>Catarrhini</taxon>
        <taxon>Hominidae</taxon>
        <taxon>Homo</taxon>
    </lineage>
</organism>
<proteinExistence type="evidence at protein level"/>
<dbReference type="EMBL" id="M29145">
    <property type="protein sequence ID" value="AAA52650.1"/>
    <property type="molecule type" value="mRNA"/>
</dbReference>
<dbReference type="EMBL" id="X16323">
    <property type="protein sequence ID" value="CAA34387.1"/>
    <property type="molecule type" value="mRNA"/>
</dbReference>
<dbReference type="EMBL" id="M60718">
    <property type="protein sequence ID" value="AAA52648.1"/>
    <property type="molecule type" value="mRNA"/>
</dbReference>
<dbReference type="EMBL" id="D90334">
    <property type="protein sequence ID" value="BAA14348.1"/>
    <property type="molecule type" value="Genomic_DNA"/>
</dbReference>
<dbReference type="EMBL" id="X57574">
    <property type="protein sequence ID" value="CAA40802.1"/>
    <property type="molecule type" value="mRNA"/>
</dbReference>
<dbReference type="EMBL" id="M55379">
    <property type="status" value="NOT_ANNOTATED_CDS"/>
    <property type="molecule type" value="mRNA"/>
</dbReference>
<dbReference type="EMBL" id="M73239">
    <property type="protein sequence ID" value="AAA64239.1"/>
    <property type="molecule type" value="mRNA"/>
</dbReference>
<dbReference type="EMBL" id="M73240">
    <property type="protein sequence ID" value="AAA64297.1"/>
    <property type="molecule type" value="mRNA"/>
</dbReference>
<dbReference type="EMBL" id="M77227">
    <property type="protein sequence ID" value="AAA35980.1"/>
    <property type="molecule type" value="mRNA"/>
</dbReference>
<dbReference type="EMBL" id="L02931">
    <property type="protein sequence ID" value="AAA52649.1"/>
    <property type="molecule type" value="mRNA"/>
</dbReference>
<dbReference type="EMBL" id="U46010">
    <property type="protein sequence ID" value="AAC50539.1"/>
    <property type="molecule type" value="mRNA"/>
</dbReference>
<dbReference type="EMBL" id="AY246560">
    <property type="protein sequence ID" value="AAO61091.1"/>
    <property type="molecule type" value="Genomic_DNA"/>
</dbReference>
<dbReference type="EMBL" id="AC004960">
    <property type="protein sequence ID" value="AAC71655.1"/>
    <property type="molecule type" value="Genomic_DNA"/>
</dbReference>
<dbReference type="EMBL" id="CH236949">
    <property type="protein sequence ID" value="EAL24189.1"/>
    <property type="molecule type" value="Genomic_DNA"/>
</dbReference>
<dbReference type="EMBL" id="BC022308">
    <property type="protein sequence ID" value="AAH22308.1"/>
    <property type="molecule type" value="mRNA"/>
</dbReference>
<dbReference type="EMBL" id="BC063485">
    <property type="protein sequence ID" value="AAH63485.1"/>
    <property type="molecule type" value="mRNA"/>
</dbReference>
<dbReference type="EMBL" id="BC105797">
    <property type="protein sequence ID" value="AAI05798.1"/>
    <property type="molecule type" value="mRNA"/>
</dbReference>
<dbReference type="EMBL" id="BC130284">
    <property type="protein sequence ID" value="AAI30285.1"/>
    <property type="molecule type" value="mRNA"/>
</dbReference>
<dbReference type="EMBL" id="BC130286">
    <property type="protein sequence ID" value="AAI30287.1"/>
    <property type="molecule type" value="mRNA"/>
</dbReference>
<dbReference type="EMBL" id="M75971">
    <property type="protein sequence ID" value="AAG53459.1"/>
    <property type="molecule type" value="Genomic_DNA"/>
</dbReference>
<dbReference type="EMBL" id="M75967">
    <property type="protein sequence ID" value="AAG53459.1"/>
    <property type="status" value="JOINED"/>
    <property type="molecule type" value="Genomic_DNA"/>
</dbReference>
<dbReference type="EMBL" id="M75966">
    <property type="protein sequence ID" value="AAG53459.1"/>
    <property type="status" value="JOINED"/>
    <property type="molecule type" value="Genomic_DNA"/>
</dbReference>
<dbReference type="EMBL" id="M75968">
    <property type="protein sequence ID" value="AAG53459.1"/>
    <property type="status" value="JOINED"/>
    <property type="molecule type" value="Genomic_DNA"/>
</dbReference>
<dbReference type="EMBL" id="M75969">
    <property type="protein sequence ID" value="AAG53459.1"/>
    <property type="status" value="JOINED"/>
    <property type="molecule type" value="Genomic_DNA"/>
</dbReference>
<dbReference type="EMBL" id="M75983">
    <property type="protein sequence ID" value="AAG53460.1"/>
    <property type="molecule type" value="Genomic_DNA"/>
</dbReference>
<dbReference type="EMBL" id="M75972">
    <property type="protein sequence ID" value="AAG53460.1"/>
    <property type="status" value="JOINED"/>
    <property type="molecule type" value="Genomic_DNA"/>
</dbReference>
<dbReference type="EMBL" id="M75973">
    <property type="protein sequence ID" value="AAG53460.1"/>
    <property type="status" value="JOINED"/>
    <property type="molecule type" value="Genomic_DNA"/>
</dbReference>
<dbReference type="EMBL" id="M75974">
    <property type="protein sequence ID" value="AAG53460.1"/>
    <property type="status" value="JOINED"/>
    <property type="molecule type" value="Genomic_DNA"/>
</dbReference>
<dbReference type="EMBL" id="M75975">
    <property type="protein sequence ID" value="AAG53460.1"/>
    <property type="status" value="JOINED"/>
    <property type="molecule type" value="Genomic_DNA"/>
</dbReference>
<dbReference type="EMBL" id="M75976">
    <property type="protein sequence ID" value="AAG53460.1"/>
    <property type="status" value="JOINED"/>
    <property type="molecule type" value="Genomic_DNA"/>
</dbReference>
<dbReference type="EMBL" id="M75977">
    <property type="protein sequence ID" value="AAG53460.1"/>
    <property type="status" value="JOINED"/>
    <property type="molecule type" value="Genomic_DNA"/>
</dbReference>
<dbReference type="EMBL" id="M75978">
    <property type="protein sequence ID" value="AAG53460.1"/>
    <property type="status" value="JOINED"/>
    <property type="molecule type" value="Genomic_DNA"/>
</dbReference>
<dbReference type="EMBL" id="M75979">
    <property type="protein sequence ID" value="AAG53460.1"/>
    <property type="status" value="JOINED"/>
    <property type="molecule type" value="Genomic_DNA"/>
</dbReference>
<dbReference type="EMBL" id="M75980">
    <property type="protein sequence ID" value="AAG53460.1"/>
    <property type="status" value="JOINED"/>
    <property type="molecule type" value="Genomic_DNA"/>
</dbReference>
<dbReference type="EMBL" id="M75981">
    <property type="protein sequence ID" value="AAG53460.1"/>
    <property type="status" value="JOINED"/>
    <property type="molecule type" value="Genomic_DNA"/>
</dbReference>
<dbReference type="EMBL" id="M75982">
    <property type="protein sequence ID" value="AAG53460.1"/>
    <property type="status" value="JOINED"/>
    <property type="molecule type" value="Genomic_DNA"/>
</dbReference>
<dbReference type="CCDS" id="CCDS47626.1">
    <molecule id="P14210-3"/>
</dbReference>
<dbReference type="CCDS" id="CCDS47627.1">
    <molecule id="P14210-2"/>
</dbReference>
<dbReference type="CCDS" id="CCDS47628.1">
    <molecule id="P14210-5"/>
</dbReference>
<dbReference type="CCDS" id="CCDS47629.1">
    <molecule id="P14210-6"/>
</dbReference>
<dbReference type="CCDS" id="CCDS5597.1">
    <molecule id="P14210-1"/>
</dbReference>
<dbReference type="PIR" id="JH0579">
    <property type="entry name" value="JH0579"/>
</dbReference>
<dbReference type="RefSeq" id="NP_000592.3">
    <molecule id="P14210-1"/>
    <property type="nucleotide sequence ID" value="NM_000601.5"/>
</dbReference>
<dbReference type="RefSeq" id="NP_001010931.1">
    <molecule id="P14210-2"/>
    <property type="nucleotide sequence ID" value="NM_001010931.3"/>
</dbReference>
<dbReference type="RefSeq" id="NP_001010932.1">
    <molecule id="P14210-3"/>
    <property type="nucleotide sequence ID" value="NM_001010932.3"/>
</dbReference>
<dbReference type="RefSeq" id="NP_001010933.1">
    <molecule id="P14210-5"/>
    <property type="nucleotide sequence ID" value="NM_001010933.3"/>
</dbReference>
<dbReference type="RefSeq" id="NP_001010934.1">
    <molecule id="P14210-6"/>
    <property type="nucleotide sequence ID" value="NM_001010934.3"/>
</dbReference>
<dbReference type="RefSeq" id="XP_006716019.1">
    <property type="nucleotide sequence ID" value="XM_006715956.2"/>
</dbReference>
<dbReference type="RefSeq" id="XP_011514417.1">
    <property type="nucleotide sequence ID" value="XM_011516115.2"/>
</dbReference>
<dbReference type="RefSeq" id="XP_016867586.1">
    <property type="nucleotide sequence ID" value="XM_017012097.1"/>
</dbReference>
<dbReference type="RefSeq" id="XP_016867587.1">
    <property type="nucleotide sequence ID" value="XM_017012098.1"/>
</dbReference>
<dbReference type="RefSeq" id="XP_047276249.1">
    <molecule id="P14210-2"/>
    <property type="nucleotide sequence ID" value="XM_047420293.1"/>
</dbReference>
<dbReference type="PDB" id="1BHT">
    <property type="method" value="X-ray"/>
    <property type="resolution" value="2.00 A"/>
    <property type="chains" value="A/B=35-210"/>
</dbReference>
<dbReference type="PDB" id="1GMN">
    <property type="method" value="X-ray"/>
    <property type="resolution" value="2.30 A"/>
    <property type="chains" value="A/B=28-210"/>
</dbReference>
<dbReference type="PDB" id="1GMO">
    <property type="method" value="X-ray"/>
    <property type="resolution" value="3.00 A"/>
    <property type="chains" value="A/B/C/D/E/F/G/H=28-210"/>
</dbReference>
<dbReference type="PDB" id="1GP9">
    <property type="method" value="X-ray"/>
    <property type="resolution" value="2.50 A"/>
    <property type="chains" value="A/B/C/D=40-210"/>
</dbReference>
<dbReference type="PDB" id="1NK1">
    <property type="method" value="X-ray"/>
    <property type="resolution" value="2.50 A"/>
    <property type="chains" value="A/B=28-210"/>
</dbReference>
<dbReference type="PDB" id="1SHY">
    <property type="method" value="X-ray"/>
    <property type="resolution" value="3.22 A"/>
    <property type="chains" value="A=495-728"/>
</dbReference>
<dbReference type="PDB" id="1SI5">
    <property type="method" value="X-ray"/>
    <property type="resolution" value="2.53 A"/>
    <property type="chains" value="H=495-728"/>
</dbReference>
<dbReference type="PDB" id="2HGF">
    <property type="method" value="NMR"/>
    <property type="chains" value="A=31-127"/>
</dbReference>
<dbReference type="PDB" id="2QJ2">
    <property type="method" value="X-ray"/>
    <property type="resolution" value="1.81 A"/>
    <property type="chains" value="A/B=28-209"/>
</dbReference>
<dbReference type="PDB" id="3HMS">
    <property type="method" value="X-ray"/>
    <property type="resolution" value="1.70 A"/>
    <property type="chains" value="A=28-126"/>
</dbReference>
<dbReference type="PDB" id="3HMT">
    <property type="method" value="X-ray"/>
    <property type="resolution" value="2.00 A"/>
    <property type="chains" value="A/B=28-126"/>
</dbReference>
<dbReference type="PDB" id="3HN4">
    <property type="method" value="X-ray"/>
    <property type="resolution" value="2.60 A"/>
    <property type="chains" value="A=28-289"/>
</dbReference>
<dbReference type="PDB" id="3MKP">
    <property type="method" value="X-ray"/>
    <property type="resolution" value="2.81 A"/>
    <property type="chains" value="A/B/C/D=28-210"/>
</dbReference>
<dbReference type="PDB" id="3SP8">
    <property type="method" value="X-ray"/>
    <property type="resolution" value="1.86 A"/>
    <property type="chains" value="A/B=28-288"/>
</dbReference>
<dbReference type="PDB" id="4D3C">
    <property type="method" value="X-ray"/>
    <property type="resolution" value="2.62 A"/>
    <property type="chains" value="A=32-210"/>
</dbReference>
<dbReference type="PDB" id="4K3J">
    <property type="method" value="X-ray"/>
    <property type="resolution" value="2.80 A"/>
    <property type="chains" value="A=495-721"/>
</dbReference>
<dbReference type="PDB" id="4O3T">
    <property type="method" value="X-ray"/>
    <property type="resolution" value="2.99 A"/>
    <property type="chains" value="A=495-728"/>
</dbReference>
<dbReference type="PDB" id="4O3U">
    <property type="method" value="X-ray"/>
    <property type="resolution" value="3.04 A"/>
    <property type="chains" value="A=495-728"/>
</dbReference>
<dbReference type="PDB" id="5COE">
    <property type="method" value="X-ray"/>
    <property type="resolution" value="2.18 A"/>
    <property type="chains" value="A/B=28-210"/>
</dbReference>
<dbReference type="PDB" id="5CP9">
    <property type="method" value="X-ray"/>
    <property type="resolution" value="1.90 A"/>
    <property type="chains" value="A/B=28-210"/>
</dbReference>
<dbReference type="PDB" id="5CS1">
    <property type="method" value="X-ray"/>
    <property type="resolution" value="2.00 A"/>
    <property type="chains" value="A/B=28-210"/>
</dbReference>
<dbReference type="PDB" id="5CS3">
    <property type="method" value="X-ray"/>
    <property type="resolution" value="2.50 A"/>
    <property type="chains" value="A/B=28-210"/>
</dbReference>
<dbReference type="PDB" id="5CS5">
    <property type="method" value="X-ray"/>
    <property type="resolution" value="1.90 A"/>
    <property type="chains" value="A/B=28-210"/>
</dbReference>
<dbReference type="PDB" id="5CS9">
    <property type="method" value="X-ray"/>
    <property type="resolution" value="2.00 A"/>
    <property type="chains" value="A/B=28-210"/>
</dbReference>
<dbReference type="PDB" id="5CSQ">
    <property type="method" value="X-ray"/>
    <property type="resolution" value="1.95 A"/>
    <property type="chains" value="A/B=28-210"/>
</dbReference>
<dbReference type="PDB" id="5CT1">
    <property type="method" value="X-ray"/>
    <property type="resolution" value="2.00 A"/>
    <property type="chains" value="A/B=28-210"/>
</dbReference>
<dbReference type="PDB" id="5CT2">
    <property type="method" value="X-ray"/>
    <property type="resolution" value="2.00 A"/>
    <property type="chains" value="A/B=28-210"/>
</dbReference>
<dbReference type="PDB" id="5CT3">
    <property type="method" value="X-ray"/>
    <property type="resolution" value="2.00 A"/>
    <property type="chains" value="A/B=28-210"/>
</dbReference>
<dbReference type="PDB" id="7MO7">
    <property type="method" value="EM"/>
    <property type="resolution" value="4.80 A"/>
    <property type="chains" value="A/D=1-728"/>
</dbReference>
<dbReference type="PDB" id="7MO8">
    <property type="method" value="EM"/>
    <property type="resolution" value="4.50 A"/>
    <property type="chains" value="A=1-728"/>
</dbReference>
<dbReference type="PDB" id="7MO9">
    <property type="method" value="EM"/>
    <property type="resolution" value="4.00 A"/>
    <property type="chains" value="A/D=1-728"/>
</dbReference>
<dbReference type="PDB" id="7MOA">
    <property type="method" value="EM"/>
    <property type="resolution" value="4.90 A"/>
    <property type="chains" value="A/D=1-728"/>
</dbReference>
<dbReference type="PDB" id="7MOB">
    <property type="method" value="EM"/>
    <property type="resolution" value="5.00 A"/>
    <property type="chains" value="A/B=1-210"/>
</dbReference>
<dbReference type="PDB" id="7OCL">
    <property type="method" value="X-ray"/>
    <property type="resolution" value="1.80 A"/>
    <property type="chains" value="A/B=125-290"/>
</dbReference>
<dbReference type="PDB" id="7OCM">
    <property type="method" value="X-ray"/>
    <property type="resolution" value="1.70 A"/>
    <property type="chains" value="A=125-290"/>
</dbReference>
<dbReference type="PDBsum" id="1BHT"/>
<dbReference type="PDBsum" id="1GMN"/>
<dbReference type="PDBsum" id="1GMO"/>
<dbReference type="PDBsum" id="1GP9"/>
<dbReference type="PDBsum" id="1NK1"/>
<dbReference type="PDBsum" id="1SHY"/>
<dbReference type="PDBsum" id="1SI5"/>
<dbReference type="PDBsum" id="2HGF"/>
<dbReference type="PDBsum" id="2QJ2"/>
<dbReference type="PDBsum" id="3HMS"/>
<dbReference type="PDBsum" id="3HMT"/>
<dbReference type="PDBsum" id="3HN4"/>
<dbReference type="PDBsum" id="3MKP"/>
<dbReference type="PDBsum" id="3SP8"/>
<dbReference type="PDBsum" id="4D3C"/>
<dbReference type="PDBsum" id="4K3J"/>
<dbReference type="PDBsum" id="4O3T"/>
<dbReference type="PDBsum" id="4O3U"/>
<dbReference type="PDBsum" id="5COE"/>
<dbReference type="PDBsum" id="5CP9"/>
<dbReference type="PDBsum" id="5CS1"/>
<dbReference type="PDBsum" id="5CS3"/>
<dbReference type="PDBsum" id="5CS5"/>
<dbReference type="PDBsum" id="5CS9"/>
<dbReference type="PDBsum" id="5CSQ"/>
<dbReference type="PDBsum" id="5CT1"/>
<dbReference type="PDBsum" id="5CT2"/>
<dbReference type="PDBsum" id="5CT3"/>
<dbReference type="PDBsum" id="7MO7"/>
<dbReference type="PDBsum" id="7MO8"/>
<dbReference type="PDBsum" id="7MO9"/>
<dbReference type="PDBsum" id="7MOA"/>
<dbReference type="PDBsum" id="7MOB"/>
<dbReference type="PDBsum" id="7OCL"/>
<dbReference type="PDBsum" id="7OCM"/>
<dbReference type="EMDB" id="EMD-23919"/>
<dbReference type="EMDB" id="EMD-23920"/>
<dbReference type="EMDB" id="EMD-23921"/>
<dbReference type="EMDB" id="EMD-23922"/>
<dbReference type="EMDB" id="EMD-23923"/>
<dbReference type="SASBDB" id="P14210"/>
<dbReference type="SMR" id="P14210"/>
<dbReference type="BioGRID" id="109330">
    <property type="interactions" value="42"/>
</dbReference>
<dbReference type="CORUM" id="P14210"/>
<dbReference type="DIP" id="DIP-37535N"/>
<dbReference type="FunCoup" id="P14210">
    <property type="interactions" value="967"/>
</dbReference>
<dbReference type="IntAct" id="P14210">
    <property type="interactions" value="15"/>
</dbReference>
<dbReference type="MINT" id="P14210"/>
<dbReference type="STRING" id="9606.ENSP00000222390"/>
<dbReference type="BindingDB" id="P14210"/>
<dbReference type="ChEMBL" id="CHEMBL5479"/>
<dbReference type="DrugBank" id="DB05434">
    <property type="generic name" value="ABT-510"/>
</dbReference>
<dbReference type="DrugBank" id="DB12307">
    <property type="generic name" value="Foretinib"/>
</dbReference>
<dbReference type="DrugBank" id="DB01109">
    <property type="generic name" value="Heparin"/>
</dbReference>
<dbReference type="DrugBank" id="DB03959">
    <property type="generic name" value="N,O6-Disulfo-Glucosamine"/>
</dbReference>
<dbReference type="DrugBank" id="DB02264">
    <property type="generic name" value="O2-Sulfo-Glucuronic Acid"/>
</dbReference>
<dbReference type="DrugBank" id="DB00313">
    <property type="generic name" value="Valproic acid"/>
</dbReference>
<dbReference type="MEROPS" id="S01.976"/>
<dbReference type="GlyConnect" id="219">
    <property type="glycosylation" value="8 N-Linked glycans (4 sites), 1 O-Linked glycan (1 site)"/>
</dbReference>
<dbReference type="GlyCosmos" id="P14210">
    <property type="glycosylation" value="5 sites, 16 glycans"/>
</dbReference>
<dbReference type="GlyGen" id="P14210">
    <property type="glycosylation" value="5 sites, 29 N-linked glycans (4 sites), 2 O-linked glycans (1 site)"/>
</dbReference>
<dbReference type="iPTMnet" id="P14210"/>
<dbReference type="PhosphoSitePlus" id="P14210"/>
<dbReference type="BioMuta" id="HGF"/>
<dbReference type="DMDM" id="123116"/>
<dbReference type="MassIVE" id="P14210"/>
<dbReference type="PaxDb" id="9606-ENSP00000222390"/>
<dbReference type="PeptideAtlas" id="P14210"/>
<dbReference type="ProteomicsDB" id="53034">
    <molecule id="P14210-1"/>
</dbReference>
<dbReference type="ProteomicsDB" id="53035">
    <molecule id="P14210-2"/>
</dbReference>
<dbReference type="ProteomicsDB" id="53036">
    <molecule id="P14210-3"/>
</dbReference>
<dbReference type="ProteomicsDB" id="53037">
    <molecule id="P14210-4"/>
</dbReference>
<dbReference type="ProteomicsDB" id="53038">
    <molecule id="P14210-5"/>
</dbReference>
<dbReference type="ProteomicsDB" id="53039">
    <molecule id="P14210-6"/>
</dbReference>
<dbReference type="ABCD" id="P14210">
    <property type="antibodies" value="28 sequenced antibodies"/>
</dbReference>
<dbReference type="Antibodypedia" id="4150">
    <property type="antibodies" value="1151 antibodies from 46 providers"/>
</dbReference>
<dbReference type="DNASU" id="3082"/>
<dbReference type="Ensembl" id="ENST00000222390.11">
    <molecule id="P14210-1"/>
    <property type="protein sequence ID" value="ENSP00000222390.5"/>
    <property type="gene ID" value="ENSG00000019991.18"/>
</dbReference>
<dbReference type="Ensembl" id="ENST00000423064.7">
    <molecule id="P14210-6"/>
    <property type="protein sequence ID" value="ENSP00000413829.2"/>
    <property type="gene ID" value="ENSG00000019991.18"/>
</dbReference>
<dbReference type="Ensembl" id="ENST00000444829.7">
    <molecule id="P14210-2"/>
    <property type="protein sequence ID" value="ENSP00000389854.2"/>
    <property type="gene ID" value="ENSG00000019991.18"/>
</dbReference>
<dbReference type="Ensembl" id="ENST00000453411.6">
    <molecule id="P14210-5"/>
    <property type="protein sequence ID" value="ENSP00000408270.1"/>
    <property type="gene ID" value="ENSG00000019991.18"/>
</dbReference>
<dbReference type="Ensembl" id="ENST00000457544.7">
    <molecule id="P14210-3"/>
    <property type="protein sequence ID" value="ENSP00000391238.2"/>
    <property type="gene ID" value="ENSG00000019991.18"/>
</dbReference>
<dbReference type="GeneID" id="3082"/>
<dbReference type="KEGG" id="hsa:3082"/>
<dbReference type="MANE-Select" id="ENST00000222390.11">
    <property type="protein sequence ID" value="ENSP00000222390.5"/>
    <property type="RefSeq nucleotide sequence ID" value="NM_000601.6"/>
    <property type="RefSeq protein sequence ID" value="NP_000592.3"/>
</dbReference>
<dbReference type="UCSC" id="uc003uhl.4">
    <molecule id="P14210-1"/>
    <property type="organism name" value="human"/>
</dbReference>
<dbReference type="AGR" id="HGNC:4893"/>
<dbReference type="CTD" id="3082"/>
<dbReference type="DisGeNET" id="3082"/>
<dbReference type="GeneCards" id="HGF"/>
<dbReference type="GeneReviews" id="HGF"/>
<dbReference type="HGNC" id="HGNC:4893">
    <property type="gene designation" value="HGF"/>
</dbReference>
<dbReference type="HPA" id="ENSG00000019991">
    <property type="expression patterns" value="Tissue enriched (placenta)"/>
</dbReference>
<dbReference type="MalaCards" id="HGF"/>
<dbReference type="MIM" id="142409">
    <property type="type" value="gene"/>
</dbReference>
<dbReference type="MIM" id="608265">
    <property type="type" value="phenotype"/>
</dbReference>
<dbReference type="neXtProt" id="NX_P14210"/>
<dbReference type="OpenTargets" id="ENSG00000019991"/>
<dbReference type="Orphanet" id="90636">
    <property type="disease" value="Rare autosomal recessive non-syndromic sensorineural deafness type DFNB"/>
</dbReference>
<dbReference type="PharmGKB" id="PA29269"/>
<dbReference type="VEuPathDB" id="HostDB:ENSG00000019991"/>
<dbReference type="eggNOG" id="ENOG502QR40">
    <property type="taxonomic scope" value="Eukaryota"/>
</dbReference>
<dbReference type="GeneTree" id="ENSGT00940000156019"/>
<dbReference type="HOGENOM" id="CLU_017565_1_0_1"/>
<dbReference type="InParanoid" id="P14210"/>
<dbReference type="OMA" id="CNIKVCE"/>
<dbReference type="OrthoDB" id="41905at2759"/>
<dbReference type="PAN-GO" id="P14210">
    <property type="GO annotations" value="5 GO annotations based on evolutionary models"/>
</dbReference>
<dbReference type="PhylomeDB" id="P14210"/>
<dbReference type="TreeFam" id="TF329901"/>
<dbReference type="PathwayCommons" id="P14210"/>
<dbReference type="Reactome" id="R-HSA-114608">
    <property type="pathway name" value="Platelet degranulation"/>
</dbReference>
<dbReference type="Reactome" id="R-HSA-1257604">
    <property type="pathway name" value="PIP3 activates AKT signaling"/>
</dbReference>
<dbReference type="Reactome" id="R-HSA-1266695">
    <property type="pathway name" value="Interleukin-7 signaling"/>
</dbReference>
<dbReference type="Reactome" id="R-HSA-2219530">
    <property type="pathway name" value="Constitutive Signaling by Aberrant PI3K in Cancer"/>
</dbReference>
<dbReference type="Reactome" id="R-HSA-5673001">
    <property type="pathway name" value="RAF/MAP kinase cascade"/>
</dbReference>
<dbReference type="Reactome" id="R-HSA-6785807">
    <property type="pathway name" value="Interleukin-4 and Interleukin-13 signaling"/>
</dbReference>
<dbReference type="Reactome" id="R-HSA-6806942">
    <property type="pathway name" value="MET Receptor Activation"/>
</dbReference>
<dbReference type="Reactome" id="R-HSA-6807004">
    <property type="pathway name" value="Negative regulation of MET activity"/>
</dbReference>
<dbReference type="Reactome" id="R-HSA-6811558">
    <property type="pathway name" value="PI5P, PP2A and IER3 Regulate PI3K/AKT Signaling"/>
</dbReference>
<dbReference type="Reactome" id="R-HSA-8851805">
    <property type="pathway name" value="MET activates RAS signaling"/>
</dbReference>
<dbReference type="Reactome" id="R-HSA-8851907">
    <property type="pathway name" value="MET activates PI3K/AKT signaling"/>
</dbReference>
<dbReference type="Reactome" id="R-HSA-8865999">
    <property type="pathway name" value="MET activates PTPN11"/>
</dbReference>
<dbReference type="Reactome" id="R-HSA-8874081">
    <property type="pathway name" value="MET activates PTK2 signaling"/>
</dbReference>
<dbReference type="Reactome" id="R-HSA-8875513">
    <property type="pathway name" value="MET interacts with TNS proteins"/>
</dbReference>
<dbReference type="Reactome" id="R-HSA-8875555">
    <property type="pathway name" value="MET activates RAP1 and RAC1"/>
</dbReference>
<dbReference type="Reactome" id="R-HSA-8875656">
    <property type="pathway name" value="MET receptor recycling"/>
</dbReference>
<dbReference type="Reactome" id="R-HSA-8875791">
    <property type="pathway name" value="MET activates STAT3"/>
</dbReference>
<dbReference type="Reactome" id="R-HSA-9734091">
    <property type="pathway name" value="Drug-mediated inhibition of MET activation"/>
</dbReference>
<dbReference type="SignaLink" id="P14210"/>
<dbReference type="SIGNOR" id="P14210"/>
<dbReference type="BioGRID-ORCS" id="3082">
    <property type="hits" value="42 hits in 1167 CRISPR screens"/>
</dbReference>
<dbReference type="ChiTaRS" id="HGF">
    <property type="organism name" value="human"/>
</dbReference>
<dbReference type="EvolutionaryTrace" id="P14210"/>
<dbReference type="GeneWiki" id="Hepatocyte_growth_factor"/>
<dbReference type="GenomeRNAi" id="3082"/>
<dbReference type="Pharos" id="P14210">
    <property type="development level" value="Tchem"/>
</dbReference>
<dbReference type="PRO" id="PR:P14210"/>
<dbReference type="Proteomes" id="UP000005640">
    <property type="component" value="Chromosome 7"/>
</dbReference>
<dbReference type="RNAct" id="P14210">
    <property type="molecule type" value="protein"/>
</dbReference>
<dbReference type="Bgee" id="ENSG00000019991">
    <property type="expression patterns" value="Expressed in placenta and 151 other cell types or tissues"/>
</dbReference>
<dbReference type="ExpressionAtlas" id="P14210">
    <property type="expression patterns" value="baseline and differential"/>
</dbReference>
<dbReference type="GO" id="GO:0005576">
    <property type="term" value="C:extracellular region"/>
    <property type="evidence" value="ECO:0000304"/>
    <property type="project" value="Reactome"/>
</dbReference>
<dbReference type="GO" id="GO:0005615">
    <property type="term" value="C:extracellular space"/>
    <property type="evidence" value="ECO:0000318"/>
    <property type="project" value="GO_Central"/>
</dbReference>
<dbReference type="GO" id="GO:0016020">
    <property type="term" value="C:membrane"/>
    <property type="evidence" value="ECO:0007005"/>
    <property type="project" value="UniProtKB"/>
</dbReference>
<dbReference type="GO" id="GO:0031093">
    <property type="term" value="C:platelet alpha granule lumen"/>
    <property type="evidence" value="ECO:0000304"/>
    <property type="project" value="Reactome"/>
</dbReference>
<dbReference type="GO" id="GO:0042056">
    <property type="term" value="F:chemoattractant activity"/>
    <property type="evidence" value="ECO:0000314"/>
    <property type="project" value="BHF-UCL"/>
</dbReference>
<dbReference type="GO" id="GO:0008083">
    <property type="term" value="F:growth factor activity"/>
    <property type="evidence" value="ECO:0000303"/>
    <property type="project" value="UniProtKB"/>
</dbReference>
<dbReference type="GO" id="GO:0042802">
    <property type="term" value="F:identical protein binding"/>
    <property type="evidence" value="ECO:0000353"/>
    <property type="project" value="IntAct"/>
</dbReference>
<dbReference type="GO" id="GO:0005102">
    <property type="term" value="F:signaling receptor binding"/>
    <property type="evidence" value="ECO:0000318"/>
    <property type="project" value="GO_Central"/>
</dbReference>
<dbReference type="GO" id="GO:0060326">
    <property type="term" value="P:cell chemotaxis"/>
    <property type="evidence" value="ECO:0000314"/>
    <property type="project" value="BHF-UCL"/>
</dbReference>
<dbReference type="GO" id="GO:0000902">
    <property type="term" value="P:cell morphogenesis"/>
    <property type="evidence" value="ECO:0007669"/>
    <property type="project" value="Ensembl"/>
</dbReference>
<dbReference type="GO" id="GO:0035729">
    <property type="term" value="P:cellular response to hepatocyte growth factor stimulus"/>
    <property type="evidence" value="ECO:0000314"/>
    <property type="project" value="BHF-UCL"/>
</dbReference>
<dbReference type="GO" id="GO:0050673">
    <property type="term" value="P:epithelial cell proliferation"/>
    <property type="evidence" value="ECO:0007669"/>
    <property type="project" value="Ensembl"/>
</dbReference>
<dbReference type="GO" id="GO:0001837">
    <property type="term" value="P:epithelial to mesenchymal transition"/>
    <property type="evidence" value="ECO:0000304"/>
    <property type="project" value="HGNC-UCL"/>
</dbReference>
<dbReference type="GO" id="GO:0048012">
    <property type="term" value="P:hepatocyte growth factor receptor signaling pathway"/>
    <property type="evidence" value="ECO:0000314"/>
    <property type="project" value="BHF-UCL"/>
</dbReference>
<dbReference type="GO" id="GO:0001889">
    <property type="term" value="P:liver development"/>
    <property type="evidence" value="ECO:0007669"/>
    <property type="project" value="Ensembl"/>
</dbReference>
<dbReference type="GO" id="GO:0000278">
    <property type="term" value="P:mitotic cell cycle"/>
    <property type="evidence" value="ECO:0000303"/>
    <property type="project" value="UniProtKB"/>
</dbReference>
<dbReference type="GO" id="GO:0051450">
    <property type="term" value="P:myoblast proliferation"/>
    <property type="evidence" value="ECO:0007669"/>
    <property type="project" value="Ensembl"/>
</dbReference>
<dbReference type="GO" id="GO:0043066">
    <property type="term" value="P:negative regulation of apoptotic process"/>
    <property type="evidence" value="ECO:0000318"/>
    <property type="project" value="GO_Central"/>
</dbReference>
<dbReference type="GO" id="GO:0010507">
    <property type="term" value="P:negative regulation of autophagy"/>
    <property type="evidence" value="ECO:0000303"/>
    <property type="project" value="ParkinsonsUK-UCL"/>
</dbReference>
<dbReference type="GO" id="GO:1902042">
    <property type="term" value="P:negative regulation of extrinsic apoptotic signaling pathway via death domain receptors"/>
    <property type="evidence" value="ECO:0007669"/>
    <property type="project" value="Ensembl"/>
</dbReference>
<dbReference type="GO" id="GO:1901299">
    <property type="term" value="P:negative regulation of hydrogen peroxide-mediated programmed cell death"/>
    <property type="evidence" value="ECO:0000314"/>
    <property type="project" value="BHF-UCL"/>
</dbReference>
<dbReference type="GO" id="GO:0050728">
    <property type="term" value="P:negative regulation of inflammatory response"/>
    <property type="evidence" value="ECO:0007669"/>
    <property type="project" value="Ensembl"/>
</dbReference>
<dbReference type="GO" id="GO:0032715">
    <property type="term" value="P:negative regulation of interleukin-6 production"/>
    <property type="evidence" value="ECO:0007669"/>
    <property type="project" value="Ensembl"/>
</dbReference>
<dbReference type="GO" id="GO:0090201">
    <property type="term" value="P:negative regulation of release of cytochrome c from mitochondria"/>
    <property type="evidence" value="ECO:0000314"/>
    <property type="project" value="BHF-UCL"/>
</dbReference>
<dbReference type="GO" id="GO:0030335">
    <property type="term" value="P:positive regulation of cell migration"/>
    <property type="evidence" value="ECO:0000314"/>
    <property type="project" value="BHF-UCL"/>
</dbReference>
<dbReference type="GO" id="GO:2000573">
    <property type="term" value="P:positive regulation of DNA biosynthetic process"/>
    <property type="evidence" value="ECO:0000314"/>
    <property type="project" value="UniProtKB"/>
</dbReference>
<dbReference type="GO" id="GO:0032733">
    <property type="term" value="P:positive regulation of interleukin-10 production"/>
    <property type="evidence" value="ECO:0007669"/>
    <property type="project" value="Ensembl"/>
</dbReference>
<dbReference type="GO" id="GO:0043410">
    <property type="term" value="P:positive regulation of MAPK cascade"/>
    <property type="evidence" value="ECO:0000314"/>
    <property type="project" value="BHF-UCL"/>
</dbReference>
<dbReference type="GO" id="GO:0045669">
    <property type="term" value="P:positive regulation of osteoblast differentiation"/>
    <property type="evidence" value="ECO:0000303"/>
    <property type="project" value="BHF-UCL"/>
</dbReference>
<dbReference type="GO" id="GO:0051897">
    <property type="term" value="P:positive regulation of phosphatidylinositol 3-kinase/protein kinase B signal transduction"/>
    <property type="evidence" value="ECO:0000314"/>
    <property type="project" value="BHF-UCL"/>
</dbReference>
<dbReference type="GO" id="GO:0045944">
    <property type="term" value="P:positive regulation of transcription by RNA polymerase II"/>
    <property type="evidence" value="ECO:0000303"/>
    <property type="project" value="BHF-UCL"/>
</dbReference>
<dbReference type="GO" id="GO:0060665">
    <property type="term" value="P:regulation of branching involved in salivary gland morphogenesis by mesenchymal-epithelial signaling"/>
    <property type="evidence" value="ECO:0000314"/>
    <property type="project" value="MGI"/>
</dbReference>
<dbReference type="GO" id="GO:1900744">
    <property type="term" value="P:regulation of p38MAPK cascade"/>
    <property type="evidence" value="ECO:0007669"/>
    <property type="project" value="Ensembl"/>
</dbReference>
<dbReference type="GO" id="GO:0014856">
    <property type="term" value="P:skeletal muscle cell proliferation"/>
    <property type="evidence" value="ECO:0007669"/>
    <property type="project" value="Ensembl"/>
</dbReference>
<dbReference type="CDD" id="cd00108">
    <property type="entry name" value="KR"/>
    <property type="match status" value="4"/>
</dbReference>
<dbReference type="CDD" id="cd00129">
    <property type="entry name" value="PAN_APPLE"/>
    <property type="match status" value="1"/>
</dbReference>
<dbReference type="CDD" id="cd00190">
    <property type="entry name" value="Tryp_SPc"/>
    <property type="match status" value="1"/>
</dbReference>
<dbReference type="FunFam" id="2.40.10.10:FF:000023">
    <property type="entry name" value="Hepatocyte growth factor"/>
    <property type="match status" value="1"/>
</dbReference>
<dbReference type="FunFam" id="2.40.10.10:FF:000026">
    <property type="entry name" value="Hepatocyte growth factor"/>
    <property type="match status" value="1"/>
</dbReference>
<dbReference type="FunFam" id="2.40.20.10:FF:000004">
    <property type="entry name" value="Hepatocyte growth factor"/>
    <property type="match status" value="1"/>
</dbReference>
<dbReference type="FunFam" id="2.40.20.10:FF:000007">
    <property type="entry name" value="Hepatocyte growth factor"/>
    <property type="match status" value="1"/>
</dbReference>
<dbReference type="FunFam" id="2.40.20.10:FF:000008">
    <property type="entry name" value="Hepatocyte growth factor"/>
    <property type="match status" value="1"/>
</dbReference>
<dbReference type="FunFam" id="2.40.20.10:FF:000047">
    <property type="entry name" value="Hepatocyte growth factor"/>
    <property type="match status" value="1"/>
</dbReference>
<dbReference type="FunFam" id="3.50.4.10:FF:000003">
    <property type="entry name" value="Hepatocyte growth factor"/>
    <property type="match status" value="1"/>
</dbReference>
<dbReference type="Gene3D" id="3.50.4.10">
    <property type="entry name" value="Hepatocyte Growth Factor"/>
    <property type="match status" value="1"/>
</dbReference>
<dbReference type="Gene3D" id="2.40.20.10">
    <property type="entry name" value="Plasminogen Kringle 4"/>
    <property type="match status" value="4"/>
</dbReference>
<dbReference type="Gene3D" id="2.40.10.10">
    <property type="entry name" value="Trypsin-like serine proteases"/>
    <property type="match status" value="2"/>
</dbReference>
<dbReference type="InterPro" id="IPR027284">
    <property type="entry name" value="Hepatocyte_GF"/>
</dbReference>
<dbReference type="InterPro" id="IPR024174">
    <property type="entry name" value="HGF/MST1"/>
</dbReference>
<dbReference type="InterPro" id="IPR000001">
    <property type="entry name" value="Kringle"/>
</dbReference>
<dbReference type="InterPro" id="IPR013806">
    <property type="entry name" value="Kringle-like"/>
</dbReference>
<dbReference type="InterPro" id="IPR018056">
    <property type="entry name" value="Kringle_CS"/>
</dbReference>
<dbReference type="InterPro" id="IPR038178">
    <property type="entry name" value="Kringle_sf"/>
</dbReference>
<dbReference type="InterPro" id="IPR003609">
    <property type="entry name" value="Pan_app"/>
</dbReference>
<dbReference type="InterPro" id="IPR009003">
    <property type="entry name" value="Peptidase_S1_PA"/>
</dbReference>
<dbReference type="InterPro" id="IPR043504">
    <property type="entry name" value="Peptidase_S1_PA_chymotrypsin"/>
</dbReference>
<dbReference type="InterPro" id="IPR001314">
    <property type="entry name" value="Peptidase_S1A"/>
</dbReference>
<dbReference type="InterPro" id="IPR050759">
    <property type="entry name" value="Serine_protease_kringle"/>
</dbReference>
<dbReference type="InterPro" id="IPR001254">
    <property type="entry name" value="Trypsin_dom"/>
</dbReference>
<dbReference type="PANTHER" id="PTHR24261:SF8">
    <property type="entry name" value="HEPATOCYTE GROWTH FACTOR"/>
    <property type="match status" value="1"/>
</dbReference>
<dbReference type="PANTHER" id="PTHR24261">
    <property type="entry name" value="PLASMINOGEN-RELATED"/>
    <property type="match status" value="1"/>
</dbReference>
<dbReference type="Pfam" id="PF00051">
    <property type="entry name" value="Kringle"/>
    <property type="match status" value="4"/>
</dbReference>
<dbReference type="Pfam" id="PF00024">
    <property type="entry name" value="PAN_1"/>
    <property type="match status" value="1"/>
</dbReference>
<dbReference type="Pfam" id="PF00089">
    <property type="entry name" value="Trypsin"/>
    <property type="match status" value="1"/>
</dbReference>
<dbReference type="PIRSF" id="PIRSF500183">
    <property type="entry name" value="Hepatocyte_GF"/>
    <property type="match status" value="1"/>
</dbReference>
<dbReference type="PIRSF" id="PIRSF001152">
    <property type="entry name" value="HGF_MST1"/>
    <property type="match status" value="1"/>
</dbReference>
<dbReference type="PRINTS" id="PR00722">
    <property type="entry name" value="CHYMOTRYPSIN"/>
</dbReference>
<dbReference type="PRINTS" id="PR00018">
    <property type="entry name" value="KRINGLE"/>
</dbReference>
<dbReference type="SMART" id="SM00130">
    <property type="entry name" value="KR"/>
    <property type="match status" value="4"/>
</dbReference>
<dbReference type="SMART" id="SM00473">
    <property type="entry name" value="PAN_AP"/>
    <property type="match status" value="1"/>
</dbReference>
<dbReference type="SMART" id="SM00020">
    <property type="entry name" value="Tryp_SPc"/>
    <property type="match status" value="1"/>
</dbReference>
<dbReference type="SUPFAM" id="SSF57414">
    <property type="entry name" value="Hairpin loop containing domain-like"/>
    <property type="match status" value="1"/>
</dbReference>
<dbReference type="SUPFAM" id="SSF57440">
    <property type="entry name" value="Kringle-like"/>
    <property type="match status" value="4"/>
</dbReference>
<dbReference type="SUPFAM" id="SSF50494">
    <property type="entry name" value="Trypsin-like serine proteases"/>
    <property type="match status" value="1"/>
</dbReference>
<dbReference type="PROSITE" id="PS00021">
    <property type="entry name" value="KRINGLE_1"/>
    <property type="match status" value="4"/>
</dbReference>
<dbReference type="PROSITE" id="PS50070">
    <property type="entry name" value="KRINGLE_2"/>
    <property type="match status" value="4"/>
</dbReference>
<dbReference type="PROSITE" id="PS50948">
    <property type="entry name" value="PAN"/>
    <property type="match status" value="1"/>
</dbReference>
<dbReference type="PROSITE" id="PS50240">
    <property type="entry name" value="TRYPSIN_DOM"/>
    <property type="match status" value="1"/>
</dbReference>
<name>HGF_HUMAN</name>
<gene>
    <name type="primary">HGF</name>
    <name type="synonym">HPTA</name>
</gene>
<feature type="signal peptide" evidence="9">
    <location>
        <begin position="1"/>
        <end position="31"/>
    </location>
</feature>
<feature type="chain" id="PRO_0000028091" description="Hepatocyte growth factor alpha chain">
    <location>
        <begin position="32"/>
        <end position="494"/>
    </location>
</feature>
<feature type="chain" id="PRO_0000028092" description="Hepatocyte growth factor beta chain">
    <location>
        <begin position="495"/>
        <end position="728"/>
    </location>
</feature>
<feature type="domain" description="PAN" evidence="5">
    <location>
        <begin position="37"/>
        <end position="123"/>
    </location>
</feature>
<feature type="domain" description="Kringle 1" evidence="3">
    <location>
        <begin position="128"/>
        <end position="206"/>
    </location>
</feature>
<feature type="domain" description="Kringle 2" evidence="3">
    <location>
        <begin position="211"/>
        <end position="288"/>
    </location>
</feature>
<feature type="domain" description="Kringle 3" evidence="3">
    <location>
        <begin position="305"/>
        <end position="383"/>
    </location>
</feature>
<feature type="domain" description="Kringle 4" evidence="3">
    <location>
        <begin position="391"/>
        <end position="469"/>
    </location>
</feature>
<feature type="domain" description="Peptidase S1" evidence="4">
    <location>
        <begin position="495"/>
        <end position="721"/>
    </location>
</feature>
<feature type="modified residue" description="Pyrrolidone carboxylic acid" evidence="9">
    <location>
        <position position="32"/>
    </location>
</feature>
<feature type="glycosylation site" id="CAR_000021" description="N-linked (GlcNAc...) (complex) asparagine" evidence="2">
    <location>
        <position position="294"/>
    </location>
</feature>
<feature type="glycosylation site" id="CAR_000022" description="N-linked (GlcNAc...) (complex) asparagine" evidence="2">
    <location>
        <position position="402"/>
    </location>
</feature>
<feature type="glycosylation site" id="CAR_000023" description="O-linked (GalNAc...) threonine" evidence="7">
    <location>
        <position position="476"/>
    </location>
</feature>
<feature type="glycosylation site" id="CAR_000024" description="N-linked (GlcNAc...) (complex) asparagine" evidence="2">
    <location>
        <position position="566"/>
    </location>
</feature>
<feature type="glycosylation site" id="CAR_000025" description="N-linked (GlcNAc...) (complex) asparagine" evidence="2">
    <location>
        <position position="653"/>
    </location>
</feature>
<feature type="disulfide bond">
    <location>
        <begin position="70"/>
        <end position="96"/>
    </location>
</feature>
<feature type="disulfide bond">
    <location>
        <begin position="74"/>
        <end position="84"/>
    </location>
</feature>
<feature type="disulfide bond">
    <location>
        <begin position="128"/>
        <end position="206"/>
    </location>
</feature>
<feature type="disulfide bond">
    <location>
        <begin position="149"/>
        <end position="189"/>
    </location>
</feature>
<feature type="disulfide bond">
    <location>
        <begin position="177"/>
        <end position="201"/>
    </location>
</feature>
<feature type="disulfide bond" evidence="1">
    <location>
        <begin position="211"/>
        <end position="288"/>
    </location>
</feature>
<feature type="disulfide bond" evidence="1">
    <location>
        <begin position="232"/>
        <end position="271"/>
    </location>
</feature>
<feature type="disulfide bond" evidence="1">
    <location>
        <begin position="260"/>
        <end position="283"/>
    </location>
</feature>
<feature type="disulfide bond" evidence="1">
    <location>
        <begin position="305"/>
        <end position="383"/>
    </location>
</feature>
<feature type="disulfide bond" evidence="1">
    <location>
        <begin position="326"/>
        <end position="365"/>
    </location>
</feature>
<feature type="disulfide bond" evidence="1">
    <location>
        <begin position="354"/>
        <end position="377"/>
    </location>
</feature>
<feature type="disulfide bond" evidence="1">
    <location>
        <begin position="391"/>
        <end position="469"/>
    </location>
</feature>
<feature type="disulfide bond" evidence="1">
    <location>
        <begin position="412"/>
        <end position="452"/>
    </location>
</feature>
<feature type="disulfide bond" evidence="1">
    <location>
        <begin position="440"/>
        <end position="464"/>
    </location>
</feature>
<feature type="disulfide bond" description="Interchain (between alpha and beta chains)" evidence="3 4 5">
    <location>
        <begin position="487"/>
        <end position="604"/>
    </location>
</feature>
<feature type="disulfide bond" evidence="1">
    <location>
        <begin position="519"/>
        <end position="535"/>
    </location>
</feature>
<feature type="disulfide bond" evidence="1">
    <location>
        <begin position="612"/>
        <end position="679"/>
    </location>
</feature>
<feature type="disulfide bond" evidence="1">
    <location>
        <begin position="642"/>
        <end position="658"/>
    </location>
</feature>
<feature type="disulfide bond" evidence="1">
    <location>
        <begin position="669"/>
        <end position="697"/>
    </location>
</feature>
<feature type="splice variant" id="VSP_009617" description="In isoform 3 and isoform 5." evidence="17 19">
    <location>
        <begin position="161"/>
        <end position="165"/>
    </location>
</feature>
<feature type="splice variant" id="VSP_009618" description="In isoform 6." evidence="17 21">
    <original>VE</original>
    <variation>GK</variation>
    <location>
        <begin position="209"/>
        <end position="210"/>
    </location>
</feature>
<feature type="splice variant" id="VSP_009619" description="In isoform 6." evidence="17 21">
    <location>
        <begin position="211"/>
        <end position="728"/>
    </location>
</feature>
<feature type="splice variant" id="VSP_009620" description="In isoform 4." evidence="18">
    <original>TCADNTMNDT</original>
    <variation>NMRDITWALN</variation>
    <location>
        <begin position="287"/>
        <end position="296"/>
    </location>
</feature>
<feature type="splice variant" id="VSP_009622" description="In isoform 2 and isoform 5." evidence="16 17 20">
    <original>AD</original>
    <variation>ET</variation>
    <location>
        <begin position="289"/>
        <end position="290"/>
    </location>
</feature>
<feature type="splice variant" id="VSP_009623" description="In isoform 2 and isoform 5." evidence="16 17 20">
    <location>
        <begin position="291"/>
        <end position="728"/>
    </location>
</feature>
<feature type="splice variant" id="VSP_009621" description="In isoform 4." evidence="18">
    <location>
        <begin position="297"/>
        <end position="728"/>
    </location>
</feature>
<feature type="sequence variant" id="VAR_019199" description="In dbSNP:rs5745687." evidence="15">
    <original>E</original>
    <variation>K</variation>
    <location>
        <position position="304"/>
    </location>
</feature>
<feature type="sequence variant" id="VAR_019200" description="In dbSNP:rs5745688." evidence="15">
    <original>D</original>
    <variation>Y</variation>
    <location>
        <position position="330"/>
    </location>
</feature>
<feature type="mutagenesis site" description="Loss of activity due to absence of proteolytic cleavage." evidence="6">
    <original>R</original>
    <variation>Q</variation>
    <location>
        <position position="494"/>
    </location>
</feature>
<feature type="sequence conflict" description="In Ref. 2; CAA34387." evidence="22" ref="2">
    <original>QR</original>
    <variation>HK</variation>
    <location>
        <begin position="32"/>
        <end position="33"/>
    </location>
</feature>
<feature type="sequence conflict" description="In Ref. 2; CAA34387." evidence="22" ref="2">
    <original>K</original>
    <variation>N</variation>
    <location>
        <position position="78"/>
    </location>
</feature>
<feature type="sequence conflict" description="In Ref. 6; AA sequence." evidence="22" ref="6">
    <original>P</original>
    <variation>T</variation>
    <location>
        <position position="180"/>
    </location>
</feature>
<feature type="sequence conflict" description="In Ref. 2; CAA34387." evidence="22" ref="2">
    <original>M</original>
    <variation>V</variation>
    <location>
        <position position="293"/>
    </location>
</feature>
<feature type="sequence conflict" description="In Ref. 2; CAA34387." evidence="22" ref="2">
    <original>L</original>
    <variation>M</variation>
    <location>
        <position position="300"/>
    </location>
</feature>
<feature type="sequence conflict" description="In Ref. 2; CAA34387." evidence="22" ref="2">
    <original>V</original>
    <variation>A</variation>
    <location>
        <position position="317"/>
    </location>
</feature>
<feature type="sequence conflict" description="In Ref. 2; CAA34387." evidence="22" ref="2">
    <original>E</original>
    <variation>K</variation>
    <location>
        <position position="336"/>
    </location>
</feature>
<feature type="sequence conflict" description="In Ref. 2; CAA34387." evidence="22" ref="2">
    <original>H</original>
    <variation>N</variation>
    <location>
        <position position="387"/>
    </location>
</feature>
<feature type="sequence conflict" description="In Ref. 2; CAA34387." evidence="22" ref="2">
    <original>D</original>
    <variation>N</variation>
    <location>
        <position position="416"/>
    </location>
</feature>
<feature type="sequence conflict" description="In Ref. 2; CAA34387." evidence="22" ref="2">
    <original>I</original>
    <variation>V</variation>
    <location>
        <position position="505"/>
    </location>
</feature>
<feature type="sequence conflict" description="In Ref. 2; CAA34387." evidence="22" ref="2">
    <original>V</original>
    <variation>I</variation>
    <location>
        <position position="509"/>
    </location>
</feature>
<feature type="sequence conflict" description="In Ref. 2; CAA34387." evidence="22" ref="2">
    <original>D</original>
    <variation>E</variation>
    <location>
        <position position="558"/>
    </location>
</feature>
<feature type="sequence conflict" description="In Ref. 2; CAA34387." evidence="22" ref="2">
    <original>C</original>
    <variation>R</variation>
    <location>
        <position position="561"/>
    </location>
</feature>
<feature type="sequence conflict" description="In Ref. 6; AA sequence." evidence="22" ref="6">
    <original>D</original>
    <variation>N</variation>
    <location>
        <position position="592"/>
    </location>
</feature>
<feature type="sequence conflict" description="In Ref. 2; CAA34387." evidence="22" ref="2">
    <original>S</original>
    <variation>N</variation>
    <location>
        <position position="595"/>
    </location>
</feature>
<feature type="helix" evidence="26">
    <location>
        <begin position="39"/>
        <end position="41"/>
    </location>
</feature>
<feature type="strand" evidence="26">
    <location>
        <begin position="42"/>
        <end position="52"/>
    </location>
</feature>
<feature type="strand" evidence="24">
    <location>
        <begin position="55"/>
        <end position="57"/>
    </location>
</feature>
<feature type="strand" evidence="26">
    <location>
        <begin position="60"/>
        <end position="63"/>
    </location>
</feature>
<feature type="helix" evidence="26">
    <location>
        <begin position="67"/>
        <end position="76"/>
    </location>
</feature>
<feature type="turn" evidence="32">
    <location>
        <begin position="77"/>
        <end position="79"/>
    </location>
</feature>
<feature type="strand" evidence="28">
    <location>
        <begin position="80"/>
        <end position="82"/>
    </location>
</feature>
<feature type="strand" evidence="26">
    <location>
        <begin position="86"/>
        <end position="90"/>
    </location>
</feature>
<feature type="turn" evidence="26">
    <location>
        <begin position="91"/>
        <end position="94"/>
    </location>
</feature>
<feature type="strand" evidence="26">
    <location>
        <begin position="95"/>
        <end position="100"/>
    </location>
</feature>
<feature type="strand" evidence="23">
    <location>
        <begin position="105"/>
        <end position="107"/>
    </location>
</feature>
<feature type="strand" evidence="26">
    <location>
        <begin position="108"/>
        <end position="121"/>
    </location>
</feature>
<feature type="helix" evidence="26">
    <location>
        <begin position="122"/>
        <end position="124"/>
    </location>
</feature>
<feature type="strand" evidence="35">
    <location>
        <begin position="128"/>
        <end position="130"/>
    </location>
</feature>
<feature type="strand" evidence="33">
    <location>
        <begin position="148"/>
        <end position="150"/>
    </location>
</feature>
<feature type="strand" evidence="34">
    <location>
        <begin position="156"/>
        <end position="158"/>
    </location>
</feature>
<feature type="turn" evidence="35">
    <location>
        <begin position="164"/>
        <end position="169"/>
    </location>
</feature>
<feature type="strand" evidence="35">
    <location>
        <begin position="187"/>
        <end position="193"/>
    </location>
</feature>
<feature type="strand" evidence="35">
    <location>
        <begin position="198"/>
        <end position="200"/>
    </location>
</feature>
<feature type="helix" evidence="28">
    <location>
        <begin position="206"/>
        <end position="209"/>
    </location>
</feature>
<feature type="strand" evidence="28">
    <location>
        <begin position="211"/>
        <end position="213"/>
    </location>
</feature>
<feature type="strand" evidence="28">
    <location>
        <begin position="239"/>
        <end position="241"/>
    </location>
</feature>
<feature type="helix" evidence="35">
    <location>
        <begin position="247"/>
        <end position="249"/>
    </location>
</feature>
<feature type="turn" evidence="27">
    <location>
        <begin position="251"/>
        <end position="254"/>
    </location>
</feature>
<feature type="strand" evidence="35">
    <location>
        <begin position="270"/>
        <end position="275"/>
    </location>
</feature>
<feature type="strand" evidence="35">
    <location>
        <begin position="280"/>
        <end position="282"/>
    </location>
</feature>
<feature type="strand" evidence="25">
    <location>
        <begin position="508"/>
        <end position="525"/>
    </location>
</feature>
<feature type="strand" evidence="25">
    <location>
        <begin position="528"/>
        <end position="532"/>
    </location>
</feature>
<feature type="helix" evidence="25">
    <location>
        <begin position="533"/>
        <end position="535"/>
    </location>
</feature>
<feature type="strand" evidence="25">
    <location>
        <begin position="537"/>
        <end position="539"/>
    </location>
</feature>
<feature type="helix" evidence="25">
    <location>
        <begin position="541"/>
        <end position="543"/>
    </location>
</feature>
<feature type="strand" evidence="25">
    <location>
        <begin position="544"/>
        <end position="549"/>
    </location>
</feature>
<feature type="strand" evidence="25">
    <location>
        <begin position="551"/>
        <end position="554"/>
    </location>
</feature>
<feature type="turn" evidence="25">
    <location>
        <begin position="557"/>
        <end position="561"/>
    </location>
</feature>
<feature type="strand" evidence="25">
    <location>
        <begin position="563"/>
        <end position="572"/>
    </location>
</feature>
<feature type="strand" evidence="25">
    <location>
        <begin position="579"/>
        <end position="586"/>
    </location>
</feature>
<feature type="strand" evidence="25">
    <location>
        <begin position="591"/>
        <end position="593"/>
    </location>
</feature>
<feature type="strand" evidence="25">
    <location>
        <begin position="611"/>
        <end position="618"/>
    </location>
</feature>
<feature type="strand" evidence="25">
    <location>
        <begin position="630"/>
        <end position="637"/>
    </location>
</feature>
<feature type="helix" evidence="25">
    <location>
        <begin position="639"/>
        <end position="641"/>
    </location>
</feature>
<feature type="turn" evidence="29">
    <location>
        <begin position="646"/>
        <end position="648"/>
    </location>
</feature>
<feature type="strand" evidence="25">
    <location>
        <begin position="656"/>
        <end position="660"/>
    </location>
</feature>
<feature type="strand" evidence="25">
    <location>
        <begin position="662"/>
        <end position="664"/>
    </location>
</feature>
<feature type="turn" evidence="31">
    <location>
        <begin position="670"/>
        <end position="674"/>
    </location>
</feature>
<feature type="strand" evidence="25">
    <location>
        <begin position="676"/>
        <end position="680"/>
    </location>
</feature>
<feature type="strand" evidence="25">
    <location>
        <begin position="682"/>
        <end position="691"/>
    </location>
</feature>
<feature type="strand" evidence="30">
    <location>
        <begin position="695"/>
        <end position="697"/>
    </location>
</feature>
<feature type="strand" evidence="25">
    <location>
        <begin position="704"/>
        <end position="708"/>
    </location>
</feature>
<feature type="helix" evidence="25">
    <location>
        <begin position="709"/>
        <end position="712"/>
    </location>
</feature>
<feature type="helix" evidence="25">
    <location>
        <begin position="713"/>
        <end position="720"/>
    </location>
</feature>
<reference key="1">
    <citation type="journal article" date="1989" name="Biochem. Biophys. Res. Commun.">
        <title>Molecular cloning and sequence analysis of cDNA for human hepatocyte growth factor.</title>
        <authorList>
            <person name="Miyazawa K."/>
            <person name="Tsubouchi H."/>
            <person name="Naka D."/>
            <person name="Takahashi K."/>
            <person name="Okigaki M."/>
            <person name="Arakaki N."/>
            <person name="Nakayama H."/>
            <person name="Hirono S."/>
            <person name="Sakiyama O."/>
            <person name="Takahashi K."/>
            <person name="Gohda E."/>
            <person name="Daikuhara Y."/>
            <person name="Kitamura N."/>
        </authorList>
    </citation>
    <scope>NUCLEOTIDE SEQUENCE [MRNA] (ISOFORM 1)</scope>
    <source>
        <tissue>Placenta</tissue>
    </source>
</reference>
<reference key="2">
    <citation type="journal article" date="1989" name="Nature">
        <title>Molecular cloning and expression of human hepatocyte growth factor.</title>
        <authorList>
            <person name="Nakamura T."/>
            <person name="Nishizawa T."/>
            <person name="Hagiya M."/>
            <person name="Seki T."/>
            <person name="Shimonishi M."/>
            <person name="Sugimura A."/>
            <person name="Tashiro K."/>
            <person name="Shimizu S."/>
        </authorList>
    </citation>
    <scope>NUCLEOTIDE SEQUENCE [MRNA] (ISOFORM 1)</scope>
    <scope>PROTEIN SEQUENCE OF 55-73 AND 495-520</scope>
    <source>
        <tissue>Liver</tissue>
    </source>
</reference>
<reference key="3">
    <citation type="journal article" date="1990" name="Biochem. Biophys. Res. Commun.">
        <title>Isolation and expression of cDNA for different forms of hepatocyte growth factor from human leukocyte.</title>
        <authorList>
            <person name="Seki T."/>
            <person name="Ihara I."/>
            <person name="Sugimura A."/>
            <person name="Shimonishi M."/>
            <person name="Nishizawa T."/>
            <person name="Asami O."/>
            <person name="Hagiya M."/>
            <person name="Nakamura T."/>
            <person name="Shimizu S."/>
        </authorList>
    </citation>
    <scope>NUCLEOTIDE SEQUENCE [MRNA] (ISOFORM 1)</scope>
    <source>
        <tissue>Leukocyte</tissue>
    </source>
</reference>
<reference key="4">
    <citation type="journal article" date="1991" name="Gene">
        <title>Organization of the human hepatocyte growth factor-encoding gene.</title>
        <authorList>
            <person name="Seki T."/>
            <person name="Hagiya M."/>
            <person name="Shimonishi M."/>
            <person name="Nakamura T."/>
            <person name="Shimizu S."/>
        </authorList>
    </citation>
    <scope>NUCLEOTIDE SEQUENCE [GENOMIC DNA] (ISOFORM 1)</scope>
</reference>
<reference key="5">
    <citation type="journal article" date="1991" name="Eur. J. Biochem.">
        <title>An alternatively processed mRNA generated from human hepatocyte growth factor gene.</title>
        <authorList>
            <person name="Miyazawa K."/>
            <person name="Kitamura A."/>
            <person name="Naka D."/>
            <person name="Kitamura N."/>
        </authorList>
    </citation>
    <scope>NUCLEOTIDE SEQUENCE [MRNA] (ISOFORM 2)</scope>
    <source>
        <tissue>Placenta</tissue>
    </source>
</reference>
<reference key="6">
    <citation type="journal article" date="1991" name="Proc. Natl. Acad. Sci. U.S.A.">
        <title>A broad-spectrum human lung fibroblast-derived mitogen is a variant of hepatocyte growth factor.</title>
        <authorList>
            <person name="Rubin J.S."/>
            <person name="Chan A.M.-L."/>
            <person name="Bottaro D.P."/>
            <person name="Burgess W.H."/>
            <person name="Taylor W.G."/>
            <person name="Cech A.C."/>
            <person name="Hirschfield D.W."/>
            <person name="Wong J."/>
            <person name="Miki T."/>
            <person name="Finch P.W."/>
            <person name="Aaronson S.A."/>
        </authorList>
    </citation>
    <scope>NUCLEOTIDE SEQUENCE [MRNA] (ISOFORM 3)</scope>
    <scope>PROTEIN SEQUENCE OF 583-592</scope>
    <source>
        <tissue>Lung fibroblast</tissue>
    </source>
</reference>
<reference key="7">
    <citation type="journal article" date="1991" name="Proc. Natl. Acad. Sci. U.S.A.">
        <title>Evidence for the identity of human scatter factor and human hepatocyte growth factor.</title>
        <authorList>
            <person name="Weidner K.M."/>
            <person name="Arakaki N."/>
            <person name="Hartmann G."/>
            <person name="Vandekerckhove J."/>
            <person name="Weingart S."/>
            <person name="Rieder H."/>
            <person name="Fonatsch C."/>
            <person name="Tsubouchi H."/>
            <person name="Hishida T."/>
            <person name="Daikuhara Y."/>
            <person name="Birchmeier W."/>
        </authorList>
    </citation>
    <scope>NUCLEOTIDE SEQUENCE [MRNA] (ISOFORM 1)</scope>
    <source>
        <tissue>Embryonic fibroblast</tissue>
    </source>
</reference>
<reference key="8">
    <citation type="journal article" date="1991" name="Science">
        <title>Identification of a competitive HGF antagonist encoded by an alternative transcript.</title>
        <authorList>
            <person name="Chan A.M.-L."/>
            <person name="Rubin J.S."/>
            <person name="Bottaro D.P."/>
            <person name="Hirschfield D.W."/>
            <person name="Chedid M."/>
            <person name="Aaronson S.A."/>
        </authorList>
    </citation>
    <scope>NUCLEOTIDE SEQUENCE [MRNA] (ISOFORM 4)</scope>
</reference>
<reference key="9">
    <citation type="journal article" date="1992" name="Proc. Natl. Acad. Sci. U.S.A.">
        <title>A functional domain in the heavy chain of scatter factor/hepatocyte growth factor binds the c-Met receptor and induces cell dissociation but not mitogenesis.</title>
        <authorList>
            <person name="Hartmann G."/>
            <person name="Naldini L."/>
            <person name="Weidner K.M."/>
            <person name="Sachs M."/>
            <person name="Vigna E."/>
            <person name="Comoglio P.M."/>
            <person name="Birchmeier W."/>
        </authorList>
    </citation>
    <scope>NUCLEOTIDE SEQUENCE [MRNA] (ISOFORM 2)</scope>
    <scope>MUTAGENESIS OF ARG-494</scope>
</reference>
<reference key="10">
    <citation type="journal article" date="1996" name="J. Biol. Chem.">
        <title>Hepatocyte growth factor (HGF)/NK1 is a naturally occurring HGF/scatter factor variant with partial agonist/antagonist activity.</title>
        <authorList>
            <person name="Cioce V."/>
            <person name="Csaky K.G."/>
            <person name="Chan A.M.-L."/>
            <person name="Bottaro D.P."/>
            <person name="Taylor W.G."/>
            <person name="Jensen R."/>
            <person name="Aaronson S.A."/>
            <person name="Rubin J.S."/>
        </authorList>
    </citation>
    <scope>NUCLEOTIDE SEQUENCE [MRNA] (ISOFORM 6)</scope>
</reference>
<reference key="11">
    <citation type="submission" date="2003-02" db="EMBL/GenBank/DDBJ databases">
        <authorList>
            <consortium name="NIEHS SNPs program"/>
        </authorList>
    </citation>
    <scope>NUCLEOTIDE SEQUENCE [GENOMIC DNA]</scope>
    <scope>VARIANTS LYS-304 AND TYR-330</scope>
</reference>
<reference key="12">
    <citation type="journal article" date="2003" name="Nature">
        <title>The DNA sequence of human chromosome 7.</title>
        <authorList>
            <person name="Hillier L.W."/>
            <person name="Fulton R.S."/>
            <person name="Fulton L.A."/>
            <person name="Graves T.A."/>
            <person name="Pepin K.H."/>
            <person name="Wagner-McPherson C."/>
            <person name="Layman D."/>
            <person name="Maas J."/>
            <person name="Jaeger S."/>
            <person name="Walker R."/>
            <person name="Wylie K."/>
            <person name="Sekhon M."/>
            <person name="Becker M.C."/>
            <person name="O'Laughlin M.D."/>
            <person name="Schaller M.E."/>
            <person name="Fewell G.A."/>
            <person name="Delehaunty K.D."/>
            <person name="Miner T.L."/>
            <person name="Nash W.E."/>
            <person name="Cordes M."/>
            <person name="Du H."/>
            <person name="Sun H."/>
            <person name="Edwards J."/>
            <person name="Bradshaw-Cordum H."/>
            <person name="Ali J."/>
            <person name="Andrews S."/>
            <person name="Isak A."/>
            <person name="Vanbrunt A."/>
            <person name="Nguyen C."/>
            <person name="Du F."/>
            <person name="Lamar B."/>
            <person name="Courtney L."/>
            <person name="Kalicki J."/>
            <person name="Ozersky P."/>
            <person name="Bielicki L."/>
            <person name="Scott K."/>
            <person name="Holmes A."/>
            <person name="Harkins R."/>
            <person name="Harris A."/>
            <person name="Strong C.M."/>
            <person name="Hou S."/>
            <person name="Tomlinson C."/>
            <person name="Dauphin-Kohlberg S."/>
            <person name="Kozlowicz-Reilly A."/>
            <person name="Leonard S."/>
            <person name="Rohlfing T."/>
            <person name="Rock S.M."/>
            <person name="Tin-Wollam A.-M."/>
            <person name="Abbott A."/>
            <person name="Minx P."/>
            <person name="Maupin R."/>
            <person name="Strowmatt C."/>
            <person name="Latreille P."/>
            <person name="Miller N."/>
            <person name="Johnson D."/>
            <person name="Murray J."/>
            <person name="Woessner J.P."/>
            <person name="Wendl M.C."/>
            <person name="Yang S.-P."/>
            <person name="Schultz B.R."/>
            <person name="Wallis J.W."/>
            <person name="Spieth J."/>
            <person name="Bieri T.A."/>
            <person name="Nelson J.O."/>
            <person name="Berkowicz N."/>
            <person name="Wohldmann P.E."/>
            <person name="Cook L.L."/>
            <person name="Hickenbotham M.T."/>
            <person name="Eldred J."/>
            <person name="Williams D."/>
            <person name="Bedell J.A."/>
            <person name="Mardis E.R."/>
            <person name="Clifton S.W."/>
            <person name="Chissoe S.L."/>
            <person name="Marra M.A."/>
            <person name="Raymond C."/>
            <person name="Haugen E."/>
            <person name="Gillett W."/>
            <person name="Zhou Y."/>
            <person name="James R."/>
            <person name="Phelps K."/>
            <person name="Iadanoto S."/>
            <person name="Bubb K."/>
            <person name="Simms E."/>
            <person name="Levy R."/>
            <person name="Clendenning J."/>
            <person name="Kaul R."/>
            <person name="Kent W.J."/>
            <person name="Furey T.S."/>
            <person name="Baertsch R.A."/>
            <person name="Brent M.R."/>
            <person name="Keibler E."/>
            <person name="Flicek P."/>
            <person name="Bork P."/>
            <person name="Suyama M."/>
            <person name="Bailey J.A."/>
            <person name="Portnoy M.E."/>
            <person name="Torrents D."/>
            <person name="Chinwalla A.T."/>
            <person name="Gish W.R."/>
            <person name="Eddy S.R."/>
            <person name="McPherson J.D."/>
            <person name="Olson M.V."/>
            <person name="Eichler E.E."/>
            <person name="Green E.D."/>
            <person name="Waterston R.H."/>
            <person name="Wilson R.K."/>
        </authorList>
    </citation>
    <scope>NUCLEOTIDE SEQUENCE [LARGE SCALE GENOMIC DNA]</scope>
</reference>
<reference key="13">
    <citation type="journal article" date="2003" name="Science">
        <title>Human chromosome 7: DNA sequence and biology.</title>
        <authorList>
            <person name="Scherer S.W."/>
            <person name="Cheung J."/>
            <person name="MacDonald J.R."/>
            <person name="Osborne L.R."/>
            <person name="Nakabayashi K."/>
            <person name="Herbrick J.-A."/>
            <person name="Carson A.R."/>
            <person name="Parker-Katiraee L."/>
            <person name="Skaug J."/>
            <person name="Khaja R."/>
            <person name="Zhang J."/>
            <person name="Hudek A.K."/>
            <person name="Li M."/>
            <person name="Haddad M."/>
            <person name="Duggan G.E."/>
            <person name="Fernandez B.A."/>
            <person name="Kanematsu E."/>
            <person name="Gentles S."/>
            <person name="Christopoulos C.C."/>
            <person name="Choufani S."/>
            <person name="Kwasnicka D."/>
            <person name="Zheng X.H."/>
            <person name="Lai Z."/>
            <person name="Nusskern D.R."/>
            <person name="Zhang Q."/>
            <person name="Gu Z."/>
            <person name="Lu F."/>
            <person name="Zeesman S."/>
            <person name="Nowaczyk M.J."/>
            <person name="Teshima I."/>
            <person name="Chitayat D."/>
            <person name="Shuman C."/>
            <person name="Weksberg R."/>
            <person name="Zackai E.H."/>
            <person name="Grebe T.A."/>
            <person name="Cox S.R."/>
            <person name="Kirkpatrick S.J."/>
            <person name="Rahman N."/>
            <person name="Friedman J.M."/>
            <person name="Heng H.H.Q."/>
            <person name="Pelicci P.G."/>
            <person name="Lo-Coco F."/>
            <person name="Belloni E."/>
            <person name="Shaffer L.G."/>
            <person name="Pober B."/>
            <person name="Morton C.C."/>
            <person name="Gusella J.F."/>
            <person name="Bruns G.A.P."/>
            <person name="Korf B.R."/>
            <person name="Quade B.J."/>
            <person name="Ligon A.H."/>
            <person name="Ferguson H."/>
            <person name="Higgins A.W."/>
            <person name="Leach N.T."/>
            <person name="Herrick S.R."/>
            <person name="Lemyre E."/>
            <person name="Farra C.G."/>
            <person name="Kim H.-G."/>
            <person name="Summers A.M."/>
            <person name="Gripp K.W."/>
            <person name="Roberts W."/>
            <person name="Szatmari P."/>
            <person name="Winsor E.J.T."/>
            <person name="Grzeschik K.-H."/>
            <person name="Teebi A."/>
            <person name="Minassian B.A."/>
            <person name="Kere J."/>
            <person name="Armengol L."/>
            <person name="Pujana M.A."/>
            <person name="Estivill X."/>
            <person name="Wilson M.D."/>
            <person name="Koop B.F."/>
            <person name="Tosi S."/>
            <person name="Moore G.E."/>
            <person name="Boright A.P."/>
            <person name="Zlotorynski E."/>
            <person name="Kerem B."/>
            <person name="Kroisel P.M."/>
            <person name="Petek E."/>
            <person name="Oscier D.G."/>
            <person name="Mould S.J."/>
            <person name="Doehner H."/>
            <person name="Doehner K."/>
            <person name="Rommens J.M."/>
            <person name="Vincent J.B."/>
            <person name="Venter J.C."/>
            <person name="Li P.W."/>
            <person name="Mural R.J."/>
            <person name="Adams M.D."/>
            <person name="Tsui L.-C."/>
        </authorList>
    </citation>
    <scope>NUCLEOTIDE SEQUENCE [LARGE SCALE GENOMIC DNA]</scope>
</reference>
<reference key="14">
    <citation type="journal article" date="2004" name="Genome Res.">
        <title>The status, quality, and expansion of the NIH full-length cDNA project: the Mammalian Gene Collection (MGC).</title>
        <authorList>
            <consortium name="The MGC Project Team"/>
        </authorList>
    </citation>
    <scope>NUCLEOTIDE SEQUENCE [LARGE SCALE MRNA] (ISOFORMS 1; 5 AND 6)</scope>
    <source>
        <tissue>Brain</tissue>
    </source>
</reference>
<reference key="15">
    <citation type="journal article" date="1991" name="Biochemistry">
        <title>Structural organization and the transcription initiation site of the human hepatocyte growth factor gene.</title>
        <authorList>
            <person name="Miyazawa K."/>
            <person name="Kitamura A."/>
            <person name="Kitamura N."/>
        </authorList>
    </citation>
    <scope>NUCLEOTIDE SEQUENCE OF 1-208 AND 249-695 (ISOFORM 1)</scope>
</reference>
<reference key="16">
    <citation type="journal article" date="1991" name="Biochem. Biophys. Res. Commun.">
        <title>Identification of the N-terminal residue of the heavy chain of both native and recombinant human hepatocyte growth factor.</title>
        <authorList>
            <person name="Yoshiyama Y."/>
            <person name="Arakaki N."/>
            <person name="Naka D."/>
            <person name="Takahashi K."/>
            <person name="Hirono S."/>
            <person name="Kondo J."/>
            <person name="Nakayama H."/>
            <person name="Gohda E."/>
            <person name="Kitamura N."/>
            <person name="Tsubouchi H."/>
            <person name="Ishii T."/>
            <person name="Hishida T."/>
            <person name="Daikuhara Y."/>
        </authorList>
    </citation>
    <scope>SIGNAL SEQUENCE CLEAVAGE SITE</scope>
    <scope>PYROGLUTAMATE FORMATION AT GLN-32</scope>
</reference>
<reference key="17">
    <citation type="journal article" date="1992" name="Biochem. Biophys. Res. Commun.">
        <title>Hepatocyte growth factor is linked by O-glycosylated oligosaccharide on the alpha chain.</title>
        <authorList>
            <person name="Shimizu N."/>
            <person name="Hara H."/>
            <person name="Sogabe T."/>
            <person name="Sakai H."/>
            <person name="Ihara I."/>
            <person name="Inoue H."/>
            <person name="Nakamura T."/>
            <person name="Shimizu S."/>
        </authorList>
    </citation>
    <scope>GLYCOSYLATION AT THR-476</scope>
</reference>
<reference key="18">
    <citation type="journal article" date="1992" name="EMBO J.">
        <title>Structure-function analysis of hepatocyte growth factor: identification of variants that lack mitogenic activity yet retain high affinity receptor binding.</title>
        <authorList>
            <person name="Lokker N.A."/>
            <person name="Mark M.R."/>
            <person name="Luis E.A."/>
            <person name="Bennett G.L."/>
            <person name="Robbins K.A."/>
            <person name="Baker J.B."/>
            <person name="Godowski P.J."/>
        </authorList>
    </citation>
    <scope>MUTAGENESIS</scope>
</reference>
<reference key="19">
    <citation type="journal article" date="1993" name="J. Biol. Chem.">
        <title>Activation of the zymogen of hepatocyte growth factor activator by thrombin.</title>
        <authorList>
            <person name="Shimomura T."/>
            <person name="Kondo J."/>
            <person name="Ochiai M."/>
            <person name="Naka D."/>
            <person name="Miyazawa K."/>
            <person name="Morimoto Y."/>
            <person name="Kitamura N."/>
        </authorList>
    </citation>
    <scope>PROTEOLYTIC PROCESSING</scope>
</reference>
<reference key="20">
    <citation type="journal article" date="2009" name="Am. J. Hum. Genet.">
        <title>Noncoding mutations of HGF are associated with nonsyndromic hearing loss, DFNB39.</title>
        <authorList>
            <person name="Schultz J.M."/>
            <person name="Khan S.N."/>
            <person name="Ahmed Z.M."/>
            <person name="Riazuddin S."/>
            <person name="Waryah A.M."/>
            <person name="Chhatre D."/>
            <person name="Starost M.F."/>
            <person name="Ploplis B."/>
            <person name="Buckley S."/>
            <person name="Velasquez D."/>
            <person name="Kabra M."/>
            <person name="Lee K."/>
            <person name="Hassan M.J."/>
            <person name="Ali G."/>
            <person name="Ansar M."/>
            <person name="Ghosh M."/>
            <person name="Wilcox E.R."/>
            <person name="Ahmad W."/>
            <person name="Merlino G."/>
            <person name="Leal S.M."/>
            <person name="Riazuddin S."/>
            <person name="Friedman T.B."/>
            <person name="Morell R.J."/>
        </authorList>
    </citation>
    <scope>INVOLVEMENT IN DFNB39</scope>
</reference>
<reference key="21">
    <citation type="journal article" date="2010" name="FEBS J.">
        <title>TMPRSS13, a type II transmembrane serine protease, is inhibited by hepatocyte growth factor activator inhibitor type 1 and activates pro-hepatocyte growth factor.</title>
        <authorList>
            <person name="Hashimoto T."/>
            <person name="Kato M."/>
            <person name="Shimomura T."/>
            <person name="Kitamura N."/>
        </authorList>
    </citation>
    <scope>FUNCTION</scope>
    <scope>PROTEOLYTIC PROCESSING</scope>
</reference>
<reference key="22">
    <citation type="journal article" date="2012" name="PLoS ONE">
        <title>SRPX2 is a novel chondroitin sulfate proteoglycan that is overexpressed in gastrointestinal cancer.</title>
        <authorList>
            <person name="Tanaka K."/>
            <person name="Arao T."/>
            <person name="Tamura D."/>
            <person name="Aomatsu K."/>
            <person name="Furuta K."/>
            <person name="Matsumoto K."/>
            <person name="Kaneda H."/>
            <person name="Kudo K."/>
            <person name="Fujita Y."/>
            <person name="Kimura H."/>
            <person name="Yanagihara K."/>
            <person name="Yamada Y."/>
            <person name="Okamoto I."/>
            <person name="Nakagawa K."/>
            <person name="Nishio K."/>
        </authorList>
    </citation>
    <scope>INTERACTION WITH SRPX2</scope>
</reference>
<reference key="23">
    <citation type="journal article" date="1998" name="Structure">
        <title>The solution structure of the N-terminal domain of hepatocyte growth factor reveals a potential heparin-binding site.</title>
        <authorList>
            <person name="Zhou H."/>
            <person name="Mazzulla M.J."/>
            <person name="Kaufman J.D."/>
            <person name="Stahl S.J."/>
            <person name="Wingfield P.T."/>
            <person name="Rubin J.S."/>
            <person name="Bottaro D.P."/>
            <person name="Byrd R.A."/>
        </authorList>
    </citation>
    <scope>STRUCTURE BY NMR OF 31-127</scope>
</reference>
<reference key="24">
    <citation type="journal article" date="1998" name="Structure">
        <title>Crystal structure of the NK1 fragment of human hepatocyte growth factor at 2.0-A resolution.</title>
        <authorList>
            <person name="Ultsch M."/>
            <person name="Lokker N.A."/>
            <person name="Godowski P.J."/>
            <person name="de Vos A.M."/>
        </authorList>
    </citation>
    <scope>X-RAY CRYSTALLOGRAPHY (2.0 ANGSTROMS) OF 35-210</scope>
</reference>
<reference key="25">
    <citation type="journal article" date="2004" name="EMBO J.">
        <title>Crystal structure of the HGF beta-chain in complex with the Sema domain of the Met receptor.</title>
        <authorList>
            <person name="Stamos J."/>
            <person name="Lazarus R.A."/>
            <person name="Yao X."/>
            <person name="Kirchhofer D."/>
            <person name="Wiesmann C."/>
        </authorList>
    </citation>
    <scope>X-RAY CRYSTALLOGRAPHY (3.22 ANGSTROMS) OF 495-728 IN COMPLEX WITH MET</scope>
    <scope>FUNCTION</scope>
    <scope>SUBUNIT</scope>
    <scope>DISULFIDE BONDS</scope>
</reference>
<reference key="26">
    <citation type="journal article" date="2010" name="Proc. Natl. Acad. Sci. U.S.A.">
        <title>Structural basis for agonism and antagonism of hepatocyte growth factor.</title>
        <authorList>
            <person name="Tolbert W.D."/>
            <person name="Daugherty-Holtrop J."/>
            <person name="Gherardi E."/>
            <person name="Vande Woude G."/>
            <person name="Xu H.E."/>
        </authorList>
    </citation>
    <scope>X-RAY CRYSTALLOGRAPHY (2.6 ANGSTROMS) OF 28-289</scope>
    <scope>DISULFIDE BONDS</scope>
    <scope>FUNCTION</scope>
</reference>
<accession>P14210</accession>
<accession>A1L3U6</accession>
<accession>Q02935</accession>
<accession>Q13494</accession>
<accession>Q14519</accession>
<accession>Q3KRB2</accession>
<accession>Q8TCE2</accession>
<accession>Q9BYL9</accession>
<accession>Q9BYM0</accession>
<accession>Q9UDU6</accession>
<protein>
    <recommendedName>
        <fullName>Hepatocyte growth factor</fullName>
    </recommendedName>
    <alternativeName>
        <fullName>Hepatopoietin-A</fullName>
    </alternativeName>
    <alternativeName>
        <fullName>Scatter factor</fullName>
        <shortName>SF</shortName>
    </alternativeName>
    <component>
        <recommendedName>
            <fullName>Hepatocyte growth factor alpha chain</fullName>
        </recommendedName>
    </component>
    <component>
        <recommendedName>
            <fullName>Hepatocyte growth factor beta chain</fullName>
        </recommendedName>
    </component>
</protein>
<keyword id="KW-0002">3D-structure</keyword>
<keyword id="KW-0025">Alternative splicing</keyword>
<keyword id="KW-0209">Deafness</keyword>
<keyword id="KW-0903">Direct protein sequencing</keyword>
<keyword id="KW-1015">Disulfide bond</keyword>
<keyword id="KW-0325">Glycoprotein</keyword>
<keyword id="KW-0339">Growth factor</keyword>
<keyword id="KW-0420">Kringle</keyword>
<keyword id="KW-1010">Non-syndromic deafness</keyword>
<keyword id="KW-1267">Proteomics identification</keyword>
<keyword id="KW-0873">Pyrrolidone carboxylic acid</keyword>
<keyword id="KW-1185">Reference proteome</keyword>
<keyword id="KW-0677">Repeat</keyword>
<keyword id="KW-0721">Serine protease homolog</keyword>
<keyword id="KW-0732">Signal</keyword>